<reference key="1">
    <citation type="journal article" date="1984" name="Proc. Natl. Acad. Sci. U.S.A.">
        <title>Location of amino acid alterations in mutants of aspartate transcarbamoylase: structural aspects of interallelic complementation.</title>
        <authorList>
            <person name="Schachman H.K."/>
            <person name="Pauza C.D."/>
            <person name="Navre M."/>
            <person name="Karels M.J."/>
            <person name="Wu L."/>
            <person name="Yang Y.R."/>
        </authorList>
    </citation>
    <scope>NUCLEOTIDE SEQUENCE [GENOMIC DNA]</scope>
</reference>
<reference key="2">
    <citation type="journal article" date="1995" name="Nucleic Acids Res.">
        <title>Analysis of the Escherichia coli genome VI: DNA sequence of the region from 92.8 through 100 minutes.</title>
        <authorList>
            <person name="Burland V.D."/>
            <person name="Plunkett G. III"/>
            <person name="Sofia H.J."/>
            <person name="Daniels D.L."/>
            <person name="Blattner F.R."/>
        </authorList>
    </citation>
    <scope>NUCLEOTIDE SEQUENCE [LARGE SCALE GENOMIC DNA]</scope>
    <source>
        <strain>K12 / MG1655 / ATCC 47076</strain>
    </source>
</reference>
<reference key="3">
    <citation type="journal article" date="1997" name="Science">
        <title>The complete genome sequence of Escherichia coli K-12.</title>
        <authorList>
            <person name="Blattner F.R."/>
            <person name="Plunkett G. III"/>
            <person name="Bloch C.A."/>
            <person name="Perna N.T."/>
            <person name="Burland V."/>
            <person name="Riley M."/>
            <person name="Collado-Vides J."/>
            <person name="Glasner J.D."/>
            <person name="Rode C.K."/>
            <person name="Mayhew G.F."/>
            <person name="Gregor J."/>
            <person name="Davis N.W."/>
            <person name="Kirkpatrick H.A."/>
            <person name="Goeden M.A."/>
            <person name="Rose D.J."/>
            <person name="Mau B."/>
            <person name="Shao Y."/>
        </authorList>
    </citation>
    <scope>NUCLEOTIDE SEQUENCE [LARGE SCALE GENOMIC DNA]</scope>
    <source>
        <strain>K12 / MG1655 / ATCC 47076</strain>
    </source>
</reference>
<reference key="4">
    <citation type="journal article" date="2006" name="Mol. Syst. Biol.">
        <title>Highly accurate genome sequences of Escherichia coli K-12 strains MG1655 and W3110.</title>
        <authorList>
            <person name="Hayashi K."/>
            <person name="Morooka N."/>
            <person name="Yamamoto Y."/>
            <person name="Fujita K."/>
            <person name="Isono K."/>
            <person name="Choi S."/>
            <person name="Ohtsubo E."/>
            <person name="Baba T."/>
            <person name="Wanner B.L."/>
            <person name="Mori H."/>
            <person name="Horiuchi T."/>
        </authorList>
    </citation>
    <scope>NUCLEOTIDE SEQUENCE [LARGE SCALE GENOMIC DNA]</scope>
    <source>
        <strain>K12 / W3110 / ATCC 27325 / DSM 5911</strain>
    </source>
</reference>
<reference key="5">
    <citation type="submission" date="1994-09" db="UniProtKB">
        <authorList>
            <person name="Pasquali C."/>
            <person name="Sanchez J.-C."/>
            <person name="Ravier F."/>
            <person name="Golaz O."/>
            <person name="Hughes G.J."/>
            <person name="Frutiger S."/>
            <person name="Paquet N."/>
            <person name="Wilkins M."/>
            <person name="Appel R.D."/>
            <person name="Bairoch A."/>
            <person name="Hochstrasser D.F."/>
        </authorList>
    </citation>
    <scope>PROTEIN SEQUENCE OF 2-11</scope>
    <source>
        <strain>K12 / W3110 / ATCC 27325 / DSM 5911</strain>
    </source>
</reference>
<reference key="6">
    <citation type="journal article" date="1997" name="Electrophoresis">
        <title>Comparing the predicted and observed properties of proteins encoded in the genome of Escherichia coli K-12.</title>
        <authorList>
            <person name="Link A.J."/>
            <person name="Robison K."/>
            <person name="Church G.M."/>
        </authorList>
    </citation>
    <scope>PROTEIN SEQUENCE OF 2-13</scope>
    <source>
        <strain>K12 / EMG2</strain>
    </source>
</reference>
<reference key="7">
    <citation type="journal article" date="1985" name="J. Mol. Biol.">
        <title>Structure-function relationship in allosteric aspartate carbamoyltransferase from Escherichia coli. I. Primary structure of a pyrI gene encoding a modified regulatory subunit.</title>
        <authorList>
            <person name="Cunin R."/>
            <person name="Jacobs A."/>
            <person name="Charlier D.R.M."/>
            <person name="Crabeel M."/>
            <person name="Herve G."/>
            <person name="Glansdorff N."/>
            <person name="Pierard A."/>
        </authorList>
    </citation>
    <scope>NUCLEOTIDE SEQUENCE [GENOMIC DNA] OF 128-153</scope>
</reference>
<reference key="8">
    <citation type="journal article" date="1968" name="Nature">
        <title>New structural model of E. coli aspartate transcarbamylase and the amino-acid sequence of the regulatory polypeptide chain.</title>
        <authorList>
            <person name="Weber K."/>
        </authorList>
    </citation>
    <scope>PRELIMINARY PROTEIN SEQUENCE OF 2-153</scope>
</reference>
<reference key="9">
    <citation type="journal article" date="1997" name="Electrophoresis">
        <title>Escherichia coli proteome analysis using the gene-protein database.</title>
        <authorList>
            <person name="VanBogelen R.A."/>
            <person name="Abshire K.Z."/>
            <person name="Moldover B."/>
            <person name="Olson E.R."/>
            <person name="Neidhardt F.C."/>
        </authorList>
    </citation>
    <scope>IDENTIFICATION BY 2D-GEL</scope>
</reference>
<reference key="10">
    <citation type="journal article" date="1978" name="Proc. Natl. Acad. Sci. U.S.A.">
        <title>Three-dimensional structures of aspartate carbamoyltransferase from Escherichia coli and of its complex with cytidine triphosphate.</title>
        <authorList>
            <person name="Monaco H.L."/>
            <person name="Crawford J.L."/>
            <person name="Lipscomb W.N."/>
        </authorList>
    </citation>
    <scope>X-RAY CRYSTALLOGRAPHY (2.8 ANGSTROMS)</scope>
</reference>
<reference key="11">
    <citation type="journal article" date="1984" name="Proc. Natl. Acad. Sci. U.S.A.">
        <title>Structure of unligated aspartate carbamoyltransferase of Escherichia coli at 2.6-A resolution.</title>
        <authorList>
            <person name="Ke H.-M."/>
            <person name="Honzatko R.B."/>
            <person name="Lipscomb W.N."/>
        </authorList>
    </citation>
    <scope>X-RAY CRYSTALLOGRAPHY (2.6 ANGSTROMS)</scope>
    <scope>SUBUNIT</scope>
</reference>
<reference key="12">
    <citation type="journal article" date="1990" name="Biochemistry">
        <title>Structural consequences of effector binding to the T state of aspartate carbamoyltransferase: crystal structures of the unligated and ATP- and CTP-complexed enzymes at 2.6-A resolution.</title>
        <authorList>
            <person name="Stevens R.C."/>
            <person name="Gouaux J.E."/>
            <person name="Lipscomb W.N."/>
        </authorList>
    </citation>
    <scope>X-RAY CRYSTALLOGRAPHY (2.6 ANGSTROMS)</scope>
</reference>
<reference key="13">
    <citation type="journal article" date="1990" name="Biochemistry">
        <title>Crystal structures of aspartate carbamoyltransferase ligated with phosphonoacetamide, malonate, and CTP or ATP at 2.8-A resolution and neutral pH.</title>
        <authorList>
            <person name="Gouaux J.E."/>
            <person name="Stevens R.C."/>
            <person name="Lipscomb W.N."/>
        </authorList>
    </citation>
    <scope>X-RAY CRYSTALLOGRAPHY (2.8 ANGSTROMS)</scope>
</reference>
<proteinExistence type="evidence at protein level"/>
<accession>P0A7F3</accession>
<accession>P00478</accession>
<accession>Q2M663</accession>
<gene>
    <name type="primary">pyrI</name>
    <name type="ordered locus">b4244</name>
    <name type="ordered locus">JW4203</name>
</gene>
<sequence>MTHDNKLQVEAIKRGTVIDHIPAQIGFKLLSLFKLTETDQRITIGLNLPSGEMGRKDLIKIENTFLSEDQVDQLALYAPQATVNRIDNYEVVGKSRPSLPERIDNVLVCPNSNCISHAEPVSSSFAVRKRANDIALKCKYCEKEFSHNVVLAN</sequence>
<protein>
    <recommendedName>
        <fullName>Aspartate carbamoyltransferase regulatory chain</fullName>
    </recommendedName>
</protein>
<comment type="function">
    <text>Involved in allosteric regulation of aspartate carbamoyltransferase.</text>
</comment>
<comment type="cofactor">
    <cofactor>
        <name>Zn(2+)</name>
        <dbReference type="ChEBI" id="CHEBI:29105"/>
    </cofactor>
    <text>Binds 1 zinc ion per subunit.</text>
</comment>
<comment type="subunit">
    <text evidence="1">Heterododecamer (2C3:3R2) of six catalytic PyrB chains organized as two trimers (C3), and six regulatory PyrI chains organized as three dimers (R2).</text>
</comment>
<comment type="interaction">
    <interactant intactId="EBI-906630">
        <id>P0A7F3</id>
    </interactant>
    <interactant intactId="EBI-906620">
        <id>P0A786</id>
        <label>pyrB</label>
    </interactant>
    <organismsDiffer>false</organismsDiffer>
    <experiments>18</experiments>
</comment>
<comment type="similarity">
    <text evidence="4">Belongs to the PyrI family.</text>
</comment>
<organism>
    <name type="scientific">Escherichia coli (strain K12)</name>
    <dbReference type="NCBI Taxonomy" id="83333"/>
    <lineage>
        <taxon>Bacteria</taxon>
        <taxon>Pseudomonadati</taxon>
        <taxon>Pseudomonadota</taxon>
        <taxon>Gammaproteobacteria</taxon>
        <taxon>Enterobacterales</taxon>
        <taxon>Enterobacteriaceae</taxon>
        <taxon>Escherichia</taxon>
    </lineage>
</organism>
<evidence type="ECO:0000269" key="1">
    <source>
    </source>
</evidence>
<evidence type="ECO:0000269" key="2">
    <source>
    </source>
</evidence>
<evidence type="ECO:0000269" key="3">
    <source ref="5"/>
</evidence>
<evidence type="ECO:0000305" key="4"/>
<evidence type="ECO:0007829" key="5">
    <source>
        <dbReference type="PDB" id="1EZZ"/>
    </source>
</evidence>
<evidence type="ECO:0007829" key="6">
    <source>
        <dbReference type="PDB" id="1RAD"/>
    </source>
</evidence>
<evidence type="ECO:0007829" key="7">
    <source>
        <dbReference type="PDB" id="1TUG"/>
    </source>
</evidence>
<evidence type="ECO:0007829" key="8">
    <source>
        <dbReference type="PDB" id="2QG9"/>
    </source>
</evidence>
<evidence type="ECO:0007829" key="9">
    <source>
        <dbReference type="PDB" id="4FYY"/>
    </source>
</evidence>
<keyword id="KW-0002">3D-structure</keyword>
<keyword id="KW-0903">Direct protein sequencing</keyword>
<keyword id="KW-0479">Metal-binding</keyword>
<keyword id="KW-0665">Pyrimidine biosynthesis</keyword>
<keyword id="KW-1185">Reference proteome</keyword>
<keyword id="KW-0862">Zinc</keyword>
<dbReference type="EMBL" id="K01472">
    <property type="protein sequence ID" value="AAA24477.1"/>
    <property type="molecule type" value="Genomic_DNA"/>
</dbReference>
<dbReference type="EMBL" id="U14003">
    <property type="protein sequence ID" value="AAA97141.1"/>
    <property type="molecule type" value="Genomic_DNA"/>
</dbReference>
<dbReference type="EMBL" id="U00096">
    <property type="protein sequence ID" value="AAC77201.1"/>
    <property type="molecule type" value="Genomic_DNA"/>
</dbReference>
<dbReference type="EMBL" id="AP009048">
    <property type="protein sequence ID" value="BAE78243.1"/>
    <property type="molecule type" value="Genomic_DNA"/>
</dbReference>
<dbReference type="EMBL" id="M28578">
    <property type="protein sequence ID" value="AAA24487.1"/>
    <property type="molecule type" value="Genomic_DNA"/>
</dbReference>
<dbReference type="PIR" id="A93985">
    <property type="entry name" value="DTECR"/>
</dbReference>
<dbReference type="RefSeq" id="NP_418665.1">
    <property type="nucleotide sequence ID" value="NC_000913.3"/>
</dbReference>
<dbReference type="RefSeq" id="WP_000148581.1">
    <property type="nucleotide sequence ID" value="NZ_STEB01000013.1"/>
</dbReference>
<dbReference type="PDB" id="1ACM">
    <property type="method" value="X-ray"/>
    <property type="resolution" value="2.80 A"/>
    <property type="chains" value="B/D=1-153"/>
</dbReference>
<dbReference type="PDB" id="1AT1">
    <property type="method" value="X-ray"/>
    <property type="resolution" value="2.80 A"/>
    <property type="chains" value="B/D=1-153"/>
</dbReference>
<dbReference type="PDB" id="1D09">
    <property type="method" value="X-ray"/>
    <property type="resolution" value="2.10 A"/>
    <property type="chains" value="B/D=1-153"/>
</dbReference>
<dbReference type="PDB" id="1EZZ">
    <property type="method" value="X-ray"/>
    <property type="resolution" value="2.70 A"/>
    <property type="chains" value="B/D=1-153"/>
</dbReference>
<dbReference type="PDB" id="1F1B">
    <property type="method" value="X-ray"/>
    <property type="resolution" value="2.30 A"/>
    <property type="chains" value="B/D=1-153"/>
</dbReference>
<dbReference type="PDB" id="1I5O">
    <property type="method" value="X-ray"/>
    <property type="resolution" value="2.80 A"/>
    <property type="chains" value="B/D=1-153"/>
</dbReference>
<dbReference type="PDB" id="1NBE">
    <property type="method" value="X-ray"/>
    <property type="resolution" value="2.60 A"/>
    <property type="chains" value="B/D=1-153"/>
</dbReference>
<dbReference type="PDB" id="1Q95">
    <property type="method" value="X-ray"/>
    <property type="resolution" value="2.46 A"/>
    <property type="chains" value="G/H/I/J/K/L=1-153"/>
</dbReference>
<dbReference type="PDB" id="1R0B">
    <property type="method" value="X-ray"/>
    <property type="resolution" value="2.90 A"/>
    <property type="chains" value="G/H/I/J/K/L=1-153"/>
</dbReference>
<dbReference type="PDB" id="1R0C">
    <property type="method" value="X-ray"/>
    <property type="resolution" value="2.37 A"/>
    <property type="chains" value="B/H=1-153"/>
</dbReference>
<dbReference type="PDB" id="1RAA">
    <property type="method" value="X-ray"/>
    <property type="resolution" value="2.50 A"/>
    <property type="chains" value="B/D=1-153"/>
</dbReference>
<dbReference type="PDB" id="1RAB">
    <property type="method" value="X-ray"/>
    <property type="resolution" value="2.50 A"/>
    <property type="chains" value="B/D=1-153"/>
</dbReference>
<dbReference type="PDB" id="1RAC">
    <property type="method" value="X-ray"/>
    <property type="resolution" value="2.50 A"/>
    <property type="chains" value="B/D=1-153"/>
</dbReference>
<dbReference type="PDB" id="1RAD">
    <property type="method" value="X-ray"/>
    <property type="resolution" value="2.50 A"/>
    <property type="chains" value="B/D=1-153"/>
</dbReference>
<dbReference type="PDB" id="1RAE">
    <property type="method" value="X-ray"/>
    <property type="resolution" value="2.50 A"/>
    <property type="chains" value="B/D=1-153"/>
</dbReference>
<dbReference type="PDB" id="1RAF">
    <property type="method" value="X-ray"/>
    <property type="resolution" value="2.50 A"/>
    <property type="chains" value="B/D=1-153"/>
</dbReference>
<dbReference type="PDB" id="1RAG">
    <property type="method" value="X-ray"/>
    <property type="resolution" value="2.50 A"/>
    <property type="chains" value="B/D=1-153"/>
</dbReference>
<dbReference type="PDB" id="1RAH">
    <property type="method" value="X-ray"/>
    <property type="resolution" value="2.50 A"/>
    <property type="chains" value="B/D=1-153"/>
</dbReference>
<dbReference type="PDB" id="1RAI">
    <property type="method" value="X-ray"/>
    <property type="resolution" value="2.50 A"/>
    <property type="chains" value="B/D=1-153"/>
</dbReference>
<dbReference type="PDB" id="1SKU">
    <property type="method" value="X-ray"/>
    <property type="resolution" value="2.60 A"/>
    <property type="chains" value="B/D=1-153"/>
</dbReference>
<dbReference type="PDB" id="1TTH">
    <property type="method" value="X-ray"/>
    <property type="resolution" value="2.80 A"/>
    <property type="chains" value="B/D=1-153"/>
</dbReference>
<dbReference type="PDB" id="1TU0">
    <property type="method" value="X-ray"/>
    <property type="resolution" value="2.55 A"/>
    <property type="chains" value="B/D=1-153"/>
</dbReference>
<dbReference type="PDB" id="1TUG">
    <property type="method" value="X-ray"/>
    <property type="resolution" value="2.10 A"/>
    <property type="chains" value="B/D=1-153"/>
</dbReference>
<dbReference type="PDB" id="1XJW">
    <property type="method" value="X-ray"/>
    <property type="resolution" value="2.71 A"/>
    <property type="chains" value="B/D=1-153"/>
</dbReference>
<dbReference type="PDB" id="1ZA1">
    <property type="method" value="X-ray"/>
    <property type="resolution" value="2.20 A"/>
    <property type="chains" value="B/D=1-153"/>
</dbReference>
<dbReference type="PDB" id="1ZA2">
    <property type="method" value="X-ray"/>
    <property type="resolution" value="2.50 A"/>
    <property type="chains" value="B/D=1-153"/>
</dbReference>
<dbReference type="PDB" id="2A0F">
    <property type="method" value="X-ray"/>
    <property type="resolution" value="2.90 A"/>
    <property type="chains" value="B/D=1-153"/>
</dbReference>
<dbReference type="PDB" id="2AIR">
    <property type="method" value="X-ray"/>
    <property type="resolution" value="2.00 A"/>
    <property type="chains" value="B/H=1-153"/>
</dbReference>
<dbReference type="PDB" id="2AT1">
    <property type="method" value="X-ray"/>
    <property type="resolution" value="2.80 A"/>
    <property type="chains" value="B/D=1-153"/>
</dbReference>
<dbReference type="PDB" id="2ATC">
    <property type="method" value="X-ray"/>
    <property type="resolution" value="3.00 A"/>
    <property type="chains" value="B=1-153"/>
</dbReference>
<dbReference type="PDB" id="2FZC">
    <property type="method" value="X-ray"/>
    <property type="resolution" value="2.10 A"/>
    <property type="chains" value="B/D=1-153"/>
</dbReference>
<dbReference type="PDB" id="2FZG">
    <property type="method" value="X-ray"/>
    <property type="resolution" value="2.25 A"/>
    <property type="chains" value="B/D=1-153"/>
</dbReference>
<dbReference type="PDB" id="2FZK">
    <property type="method" value="X-ray"/>
    <property type="resolution" value="2.50 A"/>
    <property type="chains" value="B/D=1-153"/>
</dbReference>
<dbReference type="PDB" id="2H3E">
    <property type="method" value="X-ray"/>
    <property type="resolution" value="2.30 A"/>
    <property type="chains" value="B/D=1-153"/>
</dbReference>
<dbReference type="PDB" id="2HSE">
    <property type="method" value="X-ray"/>
    <property type="resolution" value="2.60 A"/>
    <property type="chains" value="B/D=1-153"/>
</dbReference>
<dbReference type="PDB" id="2IPO">
    <property type="method" value="X-ray"/>
    <property type="resolution" value="2.60 A"/>
    <property type="chains" value="B/D=1-153"/>
</dbReference>
<dbReference type="PDB" id="2QG9">
    <property type="method" value="X-ray"/>
    <property type="resolution" value="2.70 A"/>
    <property type="chains" value="B/D=1-153"/>
</dbReference>
<dbReference type="PDB" id="2QGF">
    <property type="method" value="X-ray"/>
    <property type="resolution" value="2.20 A"/>
    <property type="chains" value="B/D=1-153"/>
</dbReference>
<dbReference type="PDB" id="3AT1">
    <property type="method" value="X-ray"/>
    <property type="resolution" value="2.80 A"/>
    <property type="chains" value="B/D=1-153"/>
</dbReference>
<dbReference type="PDB" id="3D7S">
    <property type="method" value="X-ray"/>
    <property type="resolution" value="2.80 A"/>
    <property type="chains" value="B/D=1-153"/>
</dbReference>
<dbReference type="PDB" id="3MPU">
    <property type="method" value="X-ray"/>
    <property type="resolution" value="2.86 A"/>
    <property type="chains" value="B/D/F=1-153"/>
</dbReference>
<dbReference type="PDB" id="4AT1">
    <property type="method" value="X-ray"/>
    <property type="resolution" value="2.60 A"/>
    <property type="chains" value="B/D=1-153"/>
</dbReference>
<dbReference type="PDB" id="4E2F">
    <property type="method" value="X-ray"/>
    <property type="resolution" value="2.80 A"/>
    <property type="chains" value="B/D/F/H/J/L=1-153"/>
</dbReference>
<dbReference type="PDB" id="4F04">
    <property type="method" value="X-ray"/>
    <property type="resolution" value="2.30 A"/>
    <property type="chains" value="B/D=1-153"/>
</dbReference>
<dbReference type="PDB" id="4FYV">
    <property type="method" value="X-ray"/>
    <property type="resolution" value="2.10 A"/>
    <property type="chains" value="B/D=1-153"/>
</dbReference>
<dbReference type="PDB" id="4FYW">
    <property type="method" value="X-ray"/>
    <property type="resolution" value="2.10 A"/>
    <property type="chains" value="B/D=1-153"/>
</dbReference>
<dbReference type="PDB" id="4FYX">
    <property type="method" value="X-ray"/>
    <property type="resolution" value="2.09 A"/>
    <property type="chains" value="B/D=1-153"/>
</dbReference>
<dbReference type="PDB" id="4FYY">
    <property type="method" value="X-ray"/>
    <property type="resolution" value="1.94 A"/>
    <property type="chains" value="B/D=1-153"/>
</dbReference>
<dbReference type="PDB" id="5AT1">
    <property type="method" value="X-ray"/>
    <property type="resolution" value="2.60 A"/>
    <property type="chains" value="B/D=1-153"/>
</dbReference>
<dbReference type="PDB" id="6AT1">
    <property type="method" value="X-ray"/>
    <property type="resolution" value="2.60 A"/>
    <property type="chains" value="B/D=1-153"/>
</dbReference>
<dbReference type="PDB" id="6KJ8">
    <property type="method" value="X-ray"/>
    <property type="resolution" value="3.01 A"/>
    <property type="chains" value="B/D/F=1-153"/>
</dbReference>
<dbReference type="PDB" id="6KJA">
    <property type="method" value="X-ray"/>
    <property type="resolution" value="3.06 A"/>
    <property type="chains" value="B/D/F=1-153"/>
</dbReference>
<dbReference type="PDB" id="6KJB">
    <property type="method" value="X-ray"/>
    <property type="resolution" value="2.06 A"/>
    <property type="chains" value="B=1-153"/>
</dbReference>
<dbReference type="PDB" id="7AT1">
    <property type="method" value="X-ray"/>
    <property type="resolution" value="2.80 A"/>
    <property type="chains" value="B/D=1-153"/>
</dbReference>
<dbReference type="PDB" id="8AT1">
    <property type="method" value="X-ray"/>
    <property type="resolution" value="2.80 A"/>
    <property type="chains" value="B/D=1-153"/>
</dbReference>
<dbReference type="PDB" id="8ATC">
    <property type="method" value="X-ray"/>
    <property type="resolution" value="2.50 A"/>
    <property type="chains" value="B/D=1-153"/>
</dbReference>
<dbReference type="PDB" id="9ATC">
    <property type="method" value="X-ray"/>
    <property type="resolution" value="2.40 A"/>
    <property type="chains" value="B=8-153"/>
</dbReference>
<dbReference type="PDBsum" id="1ACM"/>
<dbReference type="PDBsum" id="1AT1"/>
<dbReference type="PDBsum" id="1D09"/>
<dbReference type="PDBsum" id="1EZZ"/>
<dbReference type="PDBsum" id="1F1B"/>
<dbReference type="PDBsum" id="1I5O"/>
<dbReference type="PDBsum" id="1NBE"/>
<dbReference type="PDBsum" id="1Q95"/>
<dbReference type="PDBsum" id="1R0B"/>
<dbReference type="PDBsum" id="1R0C"/>
<dbReference type="PDBsum" id="1RAA"/>
<dbReference type="PDBsum" id="1RAB"/>
<dbReference type="PDBsum" id="1RAC"/>
<dbReference type="PDBsum" id="1RAD"/>
<dbReference type="PDBsum" id="1RAE"/>
<dbReference type="PDBsum" id="1RAF"/>
<dbReference type="PDBsum" id="1RAG"/>
<dbReference type="PDBsum" id="1RAH"/>
<dbReference type="PDBsum" id="1RAI"/>
<dbReference type="PDBsum" id="1SKU"/>
<dbReference type="PDBsum" id="1TTH"/>
<dbReference type="PDBsum" id="1TU0"/>
<dbReference type="PDBsum" id="1TUG"/>
<dbReference type="PDBsum" id="1XJW"/>
<dbReference type="PDBsum" id="1ZA1"/>
<dbReference type="PDBsum" id="1ZA2"/>
<dbReference type="PDBsum" id="2A0F"/>
<dbReference type="PDBsum" id="2AIR"/>
<dbReference type="PDBsum" id="2AT1"/>
<dbReference type="PDBsum" id="2ATC"/>
<dbReference type="PDBsum" id="2FZC"/>
<dbReference type="PDBsum" id="2FZG"/>
<dbReference type="PDBsum" id="2FZK"/>
<dbReference type="PDBsum" id="2H3E"/>
<dbReference type="PDBsum" id="2HSE"/>
<dbReference type="PDBsum" id="2IPO"/>
<dbReference type="PDBsum" id="2QG9"/>
<dbReference type="PDBsum" id="2QGF"/>
<dbReference type="PDBsum" id="3AT1"/>
<dbReference type="PDBsum" id="3D7S"/>
<dbReference type="PDBsum" id="3MPU"/>
<dbReference type="PDBsum" id="4AT1"/>
<dbReference type="PDBsum" id="4E2F"/>
<dbReference type="PDBsum" id="4F04"/>
<dbReference type="PDBsum" id="4FYV"/>
<dbReference type="PDBsum" id="4FYW"/>
<dbReference type="PDBsum" id="4FYX"/>
<dbReference type="PDBsum" id="4FYY"/>
<dbReference type="PDBsum" id="5AT1"/>
<dbReference type="PDBsum" id="6AT1"/>
<dbReference type="PDBsum" id="6KJ8"/>
<dbReference type="PDBsum" id="6KJA"/>
<dbReference type="PDBsum" id="6KJB"/>
<dbReference type="PDBsum" id="7AT1"/>
<dbReference type="PDBsum" id="8AT1"/>
<dbReference type="PDBsum" id="8ATC"/>
<dbReference type="PDBsum" id="9ATC"/>
<dbReference type="SMR" id="P0A7F3"/>
<dbReference type="BioGRID" id="4263117">
    <property type="interactions" value="12"/>
</dbReference>
<dbReference type="BioGRID" id="853052">
    <property type="interactions" value="1"/>
</dbReference>
<dbReference type="ComplexPortal" id="CPX-3091">
    <property type="entry name" value="Aspartate carbamoyltransferase complex"/>
</dbReference>
<dbReference type="DIP" id="DIP-35088N"/>
<dbReference type="FunCoup" id="P0A7F3">
    <property type="interactions" value="232"/>
</dbReference>
<dbReference type="IntAct" id="P0A7F3">
    <property type="interactions" value="2"/>
</dbReference>
<dbReference type="MINT" id="P0A7F3"/>
<dbReference type="STRING" id="511145.b4244"/>
<dbReference type="jPOST" id="P0A7F3"/>
<dbReference type="PaxDb" id="511145-b4244"/>
<dbReference type="EnsemblBacteria" id="AAC77201">
    <property type="protein sequence ID" value="AAC77201"/>
    <property type="gene ID" value="b4244"/>
</dbReference>
<dbReference type="GeneID" id="93777580"/>
<dbReference type="GeneID" id="948763"/>
<dbReference type="KEGG" id="ecj:JW4203"/>
<dbReference type="KEGG" id="eco:b4244"/>
<dbReference type="KEGG" id="ecoc:C3026_22905"/>
<dbReference type="PATRIC" id="fig|1411691.4.peg.2457"/>
<dbReference type="EchoBASE" id="EB0804"/>
<dbReference type="eggNOG" id="COG1781">
    <property type="taxonomic scope" value="Bacteria"/>
</dbReference>
<dbReference type="HOGENOM" id="CLU_128576_0_0_6"/>
<dbReference type="InParanoid" id="P0A7F3"/>
<dbReference type="OMA" id="CPNRNCI"/>
<dbReference type="OrthoDB" id="5599321at2"/>
<dbReference type="PhylomeDB" id="P0A7F3"/>
<dbReference type="BioCyc" id="EcoCyc:ASPCARBREG-MONOMER"/>
<dbReference type="BioCyc" id="MetaCyc:ASPCARBREG-MONOMER"/>
<dbReference type="EvolutionaryTrace" id="P0A7F3"/>
<dbReference type="PRO" id="PR:P0A7F3"/>
<dbReference type="Proteomes" id="UP000000625">
    <property type="component" value="Chromosome"/>
</dbReference>
<dbReference type="GO" id="GO:0009347">
    <property type="term" value="C:aspartate carbamoyltransferase complex"/>
    <property type="evidence" value="ECO:0000353"/>
    <property type="project" value="ComplexPortal"/>
</dbReference>
<dbReference type="GO" id="GO:0005737">
    <property type="term" value="C:cytoplasm"/>
    <property type="evidence" value="ECO:0007005"/>
    <property type="project" value="UniProtKB"/>
</dbReference>
<dbReference type="GO" id="GO:0008270">
    <property type="term" value="F:zinc ion binding"/>
    <property type="evidence" value="ECO:0000314"/>
    <property type="project" value="EcoCyc"/>
</dbReference>
<dbReference type="GO" id="GO:0006207">
    <property type="term" value="P:'de novo' pyrimidine nucleobase biosynthetic process"/>
    <property type="evidence" value="ECO:0000314"/>
    <property type="project" value="ComplexPortal"/>
</dbReference>
<dbReference type="GO" id="GO:0006221">
    <property type="term" value="P:pyrimidine nucleotide biosynthetic process"/>
    <property type="evidence" value="ECO:0007669"/>
    <property type="project" value="UniProtKB-UniRule"/>
</dbReference>
<dbReference type="FunFam" id="2.30.30.20:FF:000001">
    <property type="entry name" value="Aspartate carbamoyltransferase regulatory chain"/>
    <property type="match status" value="1"/>
</dbReference>
<dbReference type="FunFam" id="3.30.70.140:FF:000001">
    <property type="entry name" value="Aspartate carbamoyltransferase regulatory chain"/>
    <property type="match status" value="1"/>
</dbReference>
<dbReference type="Gene3D" id="2.30.30.20">
    <property type="entry name" value="Aspartate carbamoyltransferase regulatory subunit, C-terminal domain"/>
    <property type="match status" value="1"/>
</dbReference>
<dbReference type="Gene3D" id="3.30.70.140">
    <property type="entry name" value="Aspartate carbamoyltransferase regulatory subunit, N-terminal domain"/>
    <property type="match status" value="1"/>
</dbReference>
<dbReference type="HAMAP" id="MF_00002">
    <property type="entry name" value="Asp_carb_tr_reg"/>
    <property type="match status" value="1"/>
</dbReference>
<dbReference type="InterPro" id="IPR020545">
    <property type="entry name" value="Asp_carbamoyltransf_reg_N"/>
</dbReference>
<dbReference type="InterPro" id="IPR002801">
    <property type="entry name" value="Asp_carbamoylTrfase_reg"/>
</dbReference>
<dbReference type="InterPro" id="IPR020542">
    <property type="entry name" value="Asp_carbamoyltrfase_reg_C"/>
</dbReference>
<dbReference type="InterPro" id="IPR036792">
    <property type="entry name" value="Asp_carbatrfase_reg_C_sf"/>
</dbReference>
<dbReference type="InterPro" id="IPR036793">
    <property type="entry name" value="Asp_carbatrfase_reg_N_sf"/>
</dbReference>
<dbReference type="NCBIfam" id="TIGR00240">
    <property type="entry name" value="ATCase_reg"/>
    <property type="match status" value="1"/>
</dbReference>
<dbReference type="PANTHER" id="PTHR35805">
    <property type="entry name" value="ASPARTATE CARBAMOYLTRANSFERASE REGULATORY CHAIN"/>
    <property type="match status" value="1"/>
</dbReference>
<dbReference type="PANTHER" id="PTHR35805:SF1">
    <property type="entry name" value="ASPARTATE CARBAMOYLTRANSFERASE REGULATORY CHAIN"/>
    <property type="match status" value="1"/>
</dbReference>
<dbReference type="Pfam" id="PF01948">
    <property type="entry name" value="PyrI"/>
    <property type="match status" value="1"/>
</dbReference>
<dbReference type="Pfam" id="PF02748">
    <property type="entry name" value="PyrI_C"/>
    <property type="match status" value="1"/>
</dbReference>
<dbReference type="SUPFAM" id="SSF57825">
    <property type="entry name" value="Aspartate carbamoyltransferase, Regulatory-chain, C-terminal domain"/>
    <property type="match status" value="1"/>
</dbReference>
<dbReference type="SUPFAM" id="SSF54893">
    <property type="entry name" value="Aspartate carbamoyltransferase, Regulatory-chain, N-terminal domain"/>
    <property type="match status" value="1"/>
</dbReference>
<name>PYRI_ECOLI</name>
<feature type="initiator methionine" description="Removed" evidence="2 3">
    <location>
        <position position="1"/>
    </location>
</feature>
<feature type="chain" id="PRO_0000142303" description="Aspartate carbamoyltransferase regulatory chain">
    <location>
        <begin position="2"/>
        <end position="153"/>
    </location>
</feature>
<feature type="binding site">
    <location>
        <position position="109"/>
    </location>
    <ligand>
        <name>Zn(2+)</name>
        <dbReference type="ChEBI" id="CHEBI:29105"/>
    </ligand>
</feature>
<feature type="binding site">
    <location>
        <position position="114"/>
    </location>
    <ligand>
        <name>Zn(2+)</name>
        <dbReference type="ChEBI" id="CHEBI:29105"/>
    </ligand>
</feature>
<feature type="binding site">
    <location>
        <position position="138"/>
    </location>
    <ligand>
        <name>Zn(2+)</name>
        <dbReference type="ChEBI" id="CHEBI:29105"/>
    </ligand>
</feature>
<feature type="binding site">
    <location>
        <position position="141"/>
    </location>
    <ligand>
        <name>Zn(2+)</name>
        <dbReference type="ChEBI" id="CHEBI:29105"/>
    </ligand>
</feature>
<feature type="strand" evidence="7">
    <location>
        <begin position="5"/>
        <end position="8"/>
    </location>
</feature>
<feature type="strand" evidence="9">
    <location>
        <begin position="13"/>
        <end position="21"/>
    </location>
</feature>
<feature type="turn" evidence="9">
    <location>
        <begin position="23"/>
        <end position="25"/>
    </location>
</feature>
<feature type="helix" evidence="9">
    <location>
        <begin position="26"/>
        <end position="32"/>
    </location>
</feature>
<feature type="turn" evidence="9">
    <location>
        <begin position="33"/>
        <end position="36"/>
    </location>
</feature>
<feature type="strand" evidence="9">
    <location>
        <begin position="37"/>
        <end position="40"/>
    </location>
</feature>
<feature type="strand" evidence="9">
    <location>
        <begin position="42"/>
        <end position="50"/>
    </location>
</feature>
<feature type="turn" evidence="9">
    <location>
        <begin position="51"/>
        <end position="53"/>
    </location>
</feature>
<feature type="strand" evidence="9">
    <location>
        <begin position="54"/>
        <end position="62"/>
    </location>
</feature>
<feature type="helix" evidence="9">
    <location>
        <begin position="68"/>
        <end position="72"/>
    </location>
</feature>
<feature type="turn" evidence="9">
    <location>
        <begin position="73"/>
        <end position="77"/>
    </location>
</feature>
<feature type="strand" evidence="8">
    <location>
        <begin position="78"/>
        <end position="80"/>
    </location>
</feature>
<feature type="strand" evidence="9">
    <location>
        <begin position="82"/>
        <end position="87"/>
    </location>
</feature>
<feature type="strand" evidence="9">
    <location>
        <begin position="90"/>
        <end position="95"/>
    </location>
</feature>
<feature type="strand" evidence="9">
    <location>
        <begin position="101"/>
        <end position="106"/>
    </location>
</feature>
<feature type="strand" evidence="5">
    <location>
        <begin position="112"/>
        <end position="114"/>
    </location>
</feature>
<feature type="turn" evidence="9">
    <location>
        <begin position="115"/>
        <end position="118"/>
    </location>
</feature>
<feature type="strand" evidence="6">
    <location>
        <begin position="119"/>
        <end position="121"/>
    </location>
</feature>
<feature type="strand" evidence="9">
    <location>
        <begin position="124"/>
        <end position="129"/>
    </location>
</feature>
<feature type="strand" evidence="9">
    <location>
        <begin position="131"/>
        <end position="138"/>
    </location>
</feature>
<feature type="turn" evidence="9">
    <location>
        <begin position="139"/>
        <end position="141"/>
    </location>
</feature>
<feature type="strand" evidence="9">
    <location>
        <begin position="144"/>
        <end position="146"/>
    </location>
</feature>
<feature type="helix" evidence="9">
    <location>
        <begin position="147"/>
        <end position="152"/>
    </location>
</feature>